<gene>
    <name evidence="1" type="primary">dapD</name>
    <name type="ordered locus">ECS88_0175</name>
</gene>
<reference key="1">
    <citation type="journal article" date="2009" name="PLoS Genet.">
        <title>Organised genome dynamics in the Escherichia coli species results in highly diverse adaptive paths.</title>
        <authorList>
            <person name="Touchon M."/>
            <person name="Hoede C."/>
            <person name="Tenaillon O."/>
            <person name="Barbe V."/>
            <person name="Baeriswyl S."/>
            <person name="Bidet P."/>
            <person name="Bingen E."/>
            <person name="Bonacorsi S."/>
            <person name="Bouchier C."/>
            <person name="Bouvet O."/>
            <person name="Calteau A."/>
            <person name="Chiapello H."/>
            <person name="Clermont O."/>
            <person name="Cruveiller S."/>
            <person name="Danchin A."/>
            <person name="Diard M."/>
            <person name="Dossat C."/>
            <person name="Karoui M.E."/>
            <person name="Frapy E."/>
            <person name="Garry L."/>
            <person name="Ghigo J.M."/>
            <person name="Gilles A.M."/>
            <person name="Johnson J."/>
            <person name="Le Bouguenec C."/>
            <person name="Lescat M."/>
            <person name="Mangenot S."/>
            <person name="Martinez-Jehanne V."/>
            <person name="Matic I."/>
            <person name="Nassif X."/>
            <person name="Oztas S."/>
            <person name="Petit M.A."/>
            <person name="Pichon C."/>
            <person name="Rouy Z."/>
            <person name="Ruf C.S."/>
            <person name="Schneider D."/>
            <person name="Tourret J."/>
            <person name="Vacherie B."/>
            <person name="Vallenet D."/>
            <person name="Medigue C."/>
            <person name="Rocha E.P.C."/>
            <person name="Denamur E."/>
        </authorList>
    </citation>
    <scope>NUCLEOTIDE SEQUENCE [LARGE SCALE GENOMIC DNA]</scope>
    <source>
        <strain>S88 / ExPEC</strain>
    </source>
</reference>
<organism>
    <name type="scientific">Escherichia coli O45:K1 (strain S88 / ExPEC)</name>
    <dbReference type="NCBI Taxonomy" id="585035"/>
    <lineage>
        <taxon>Bacteria</taxon>
        <taxon>Pseudomonadati</taxon>
        <taxon>Pseudomonadota</taxon>
        <taxon>Gammaproteobacteria</taxon>
        <taxon>Enterobacterales</taxon>
        <taxon>Enterobacteriaceae</taxon>
        <taxon>Escherichia</taxon>
    </lineage>
</organism>
<name>DAPD_ECO45</name>
<evidence type="ECO:0000255" key="1">
    <source>
        <dbReference type="HAMAP-Rule" id="MF_00811"/>
    </source>
</evidence>
<dbReference type="EC" id="2.3.1.117" evidence="1"/>
<dbReference type="EMBL" id="CU928161">
    <property type="protein sequence ID" value="CAR01540.1"/>
    <property type="molecule type" value="Genomic_DNA"/>
</dbReference>
<dbReference type="RefSeq" id="WP_001186656.1">
    <property type="nucleotide sequence ID" value="NC_011742.1"/>
</dbReference>
<dbReference type="SMR" id="B7MBE7"/>
<dbReference type="KEGG" id="ecz:ECS88_0175"/>
<dbReference type="HOGENOM" id="CLU_050859_0_1_6"/>
<dbReference type="UniPathway" id="UPA00034">
    <property type="reaction ID" value="UER00019"/>
</dbReference>
<dbReference type="Proteomes" id="UP000000747">
    <property type="component" value="Chromosome"/>
</dbReference>
<dbReference type="GO" id="GO:0005737">
    <property type="term" value="C:cytoplasm"/>
    <property type="evidence" value="ECO:0007669"/>
    <property type="project" value="UniProtKB-SubCell"/>
</dbReference>
<dbReference type="GO" id="GO:0008666">
    <property type="term" value="F:2,3,4,5-tetrahydropyridine-2,6-dicarboxylate N-succinyltransferase activity"/>
    <property type="evidence" value="ECO:0007669"/>
    <property type="project" value="UniProtKB-UniRule"/>
</dbReference>
<dbReference type="GO" id="GO:0016779">
    <property type="term" value="F:nucleotidyltransferase activity"/>
    <property type="evidence" value="ECO:0007669"/>
    <property type="project" value="TreeGrafter"/>
</dbReference>
<dbReference type="GO" id="GO:0019877">
    <property type="term" value="P:diaminopimelate biosynthetic process"/>
    <property type="evidence" value="ECO:0007669"/>
    <property type="project" value="UniProtKB-UniRule"/>
</dbReference>
<dbReference type="GO" id="GO:0009089">
    <property type="term" value="P:lysine biosynthetic process via diaminopimelate"/>
    <property type="evidence" value="ECO:0007669"/>
    <property type="project" value="UniProtKB-UniRule"/>
</dbReference>
<dbReference type="CDD" id="cd03350">
    <property type="entry name" value="LbH_THP_succinylT"/>
    <property type="match status" value="1"/>
</dbReference>
<dbReference type="FunFam" id="1.10.166.10:FF:000001">
    <property type="entry name" value="2,3,4,5-tetrahydropyridine-2,6-dicarboxylate N-succinyltransferase"/>
    <property type="match status" value="1"/>
</dbReference>
<dbReference type="FunFam" id="2.160.10.10:FF:000004">
    <property type="entry name" value="2,3,4,5-tetrahydropyridine-2,6-dicarboxylate N-succinyltransferase"/>
    <property type="match status" value="1"/>
</dbReference>
<dbReference type="Gene3D" id="2.160.10.10">
    <property type="entry name" value="Hexapeptide repeat proteins"/>
    <property type="match status" value="1"/>
</dbReference>
<dbReference type="Gene3D" id="1.10.166.10">
    <property type="entry name" value="Tetrahydrodipicolinate-N-succinyltransferase, N-terminal domain"/>
    <property type="match status" value="1"/>
</dbReference>
<dbReference type="HAMAP" id="MF_00811">
    <property type="entry name" value="DapD"/>
    <property type="match status" value="1"/>
</dbReference>
<dbReference type="InterPro" id="IPR005664">
    <property type="entry name" value="DapD_Trfase_Hexpep_rpt_fam"/>
</dbReference>
<dbReference type="InterPro" id="IPR001451">
    <property type="entry name" value="Hexapep"/>
</dbReference>
<dbReference type="InterPro" id="IPR018357">
    <property type="entry name" value="Hexapep_transf_CS"/>
</dbReference>
<dbReference type="InterPro" id="IPR023180">
    <property type="entry name" value="THP_succinylTrfase_dom1"/>
</dbReference>
<dbReference type="InterPro" id="IPR037133">
    <property type="entry name" value="THP_succinylTrfase_N_sf"/>
</dbReference>
<dbReference type="InterPro" id="IPR011004">
    <property type="entry name" value="Trimer_LpxA-like_sf"/>
</dbReference>
<dbReference type="NCBIfam" id="TIGR00965">
    <property type="entry name" value="dapD"/>
    <property type="match status" value="1"/>
</dbReference>
<dbReference type="NCBIfam" id="NF008808">
    <property type="entry name" value="PRK11830.1"/>
    <property type="match status" value="1"/>
</dbReference>
<dbReference type="PANTHER" id="PTHR19136:SF52">
    <property type="entry name" value="2,3,4,5-TETRAHYDROPYRIDINE-2,6-DICARBOXYLATE N-SUCCINYLTRANSFERASE"/>
    <property type="match status" value="1"/>
</dbReference>
<dbReference type="PANTHER" id="PTHR19136">
    <property type="entry name" value="MOLYBDENUM COFACTOR GUANYLYLTRANSFERASE"/>
    <property type="match status" value="1"/>
</dbReference>
<dbReference type="Pfam" id="PF14602">
    <property type="entry name" value="Hexapep_2"/>
    <property type="match status" value="1"/>
</dbReference>
<dbReference type="Pfam" id="PF14805">
    <property type="entry name" value="THDPS_N_2"/>
    <property type="match status" value="1"/>
</dbReference>
<dbReference type="SUPFAM" id="SSF51161">
    <property type="entry name" value="Trimeric LpxA-like enzymes"/>
    <property type="match status" value="1"/>
</dbReference>
<dbReference type="PROSITE" id="PS00101">
    <property type="entry name" value="HEXAPEP_TRANSFERASES"/>
    <property type="match status" value="1"/>
</dbReference>
<keyword id="KW-0012">Acyltransferase</keyword>
<keyword id="KW-0028">Amino-acid biosynthesis</keyword>
<keyword id="KW-0963">Cytoplasm</keyword>
<keyword id="KW-0220">Diaminopimelate biosynthesis</keyword>
<keyword id="KW-0457">Lysine biosynthesis</keyword>
<keyword id="KW-1185">Reference proteome</keyword>
<keyword id="KW-0677">Repeat</keyword>
<keyword id="KW-0808">Transferase</keyword>
<sequence length="274" mass="29891">MQQLQNIIETAFERRAEITPANADTVTREAVNQVIALLDSGALRVAEKIDGQWVTHQWLKKAVLLSFRINDNQVIEGAESRYFDKVPMKFANYDEARFQKEGFRVVPPAAVRQGAFIARNTVLMPSYVNIGAYVDEGTMVDTWATVGSCAQIGKNVHLSGGVGIGGVLEPLQANPTIIEDNCFIGARSEVVEGVIVEEGSVISMGVYIGQSTRIYDRETGEIHYGRVPAGSVVVSGNLPSKDGKYSLYCAVIVKKVDAKTRGKVGINELLRTID</sequence>
<feature type="chain" id="PRO_1000134041" description="2,3,4,5-tetrahydropyridine-2,6-dicarboxylate N-succinyltransferase">
    <location>
        <begin position="1"/>
        <end position="274"/>
    </location>
</feature>
<protein>
    <recommendedName>
        <fullName evidence="1">2,3,4,5-tetrahydropyridine-2,6-dicarboxylate N-succinyltransferase</fullName>
        <ecNumber evidence="1">2.3.1.117</ecNumber>
    </recommendedName>
    <alternativeName>
        <fullName evidence="1">Tetrahydrodipicolinate N-succinyltransferase</fullName>
        <shortName evidence="1">THP succinyltransferase</shortName>
        <shortName evidence="1">Tetrahydropicolinate succinylase</shortName>
    </alternativeName>
</protein>
<accession>B7MBE7</accession>
<comment type="catalytic activity">
    <reaction evidence="1">
        <text>(S)-2,3,4,5-tetrahydrodipicolinate + succinyl-CoA + H2O = (S)-2-succinylamino-6-oxoheptanedioate + CoA</text>
        <dbReference type="Rhea" id="RHEA:17325"/>
        <dbReference type="ChEBI" id="CHEBI:15377"/>
        <dbReference type="ChEBI" id="CHEBI:15685"/>
        <dbReference type="ChEBI" id="CHEBI:16845"/>
        <dbReference type="ChEBI" id="CHEBI:57287"/>
        <dbReference type="ChEBI" id="CHEBI:57292"/>
        <dbReference type="EC" id="2.3.1.117"/>
    </reaction>
</comment>
<comment type="pathway">
    <text evidence="1">Amino-acid biosynthesis; L-lysine biosynthesis via DAP pathway; LL-2,6-diaminopimelate from (S)-tetrahydrodipicolinate (succinylase route): step 1/3.</text>
</comment>
<comment type="subcellular location">
    <subcellularLocation>
        <location evidence="1">Cytoplasm</location>
    </subcellularLocation>
</comment>
<comment type="similarity">
    <text evidence="1">Belongs to the transferase hexapeptide repeat family.</text>
</comment>
<proteinExistence type="inferred from homology"/>